<proteinExistence type="evidence at protein level"/>
<keyword id="KW-0002">3D-structure</keyword>
<keyword id="KW-0028">Amino-acid biosynthesis</keyword>
<keyword id="KW-0100">Branched-chain amino acid biosynthesis</keyword>
<keyword id="KW-1017">Isopeptide bond</keyword>
<keyword id="KW-0432">Leucine biosynthesis</keyword>
<keyword id="KW-0456">Lyase</keyword>
<keyword id="KW-1185">Reference proteome</keyword>
<keyword id="KW-0832">Ubl conjugation</keyword>
<gene>
    <name type="primary">leuD</name>
    <name type="ordered locus">Rv2987c</name>
    <name type="ORF">MTV012.01c</name>
</gene>
<organism>
    <name type="scientific">Mycobacterium tuberculosis (strain ATCC 25618 / H37Rv)</name>
    <dbReference type="NCBI Taxonomy" id="83332"/>
    <lineage>
        <taxon>Bacteria</taxon>
        <taxon>Bacillati</taxon>
        <taxon>Actinomycetota</taxon>
        <taxon>Actinomycetes</taxon>
        <taxon>Mycobacteriales</taxon>
        <taxon>Mycobacteriaceae</taxon>
        <taxon>Mycobacterium</taxon>
        <taxon>Mycobacterium tuberculosis complex</taxon>
    </lineage>
</organism>
<evidence type="ECO:0000250" key="1"/>
<evidence type="ECO:0000269" key="2">
    <source>
    </source>
</evidence>
<evidence type="ECO:0000305" key="3"/>
<evidence type="ECO:0007829" key="4">
    <source>
        <dbReference type="PDB" id="3H5E"/>
    </source>
</evidence>
<evidence type="ECO:0007829" key="5">
    <source>
        <dbReference type="PDB" id="3H5J"/>
    </source>
</evidence>
<comment type="function">
    <text evidence="1">Catalyzes the isomerization between 2-isopropylmalate and 3-isopropylmalate, via the formation of 2-isopropylmaleate.</text>
</comment>
<comment type="catalytic activity">
    <reaction>
        <text>(2R,3S)-3-isopropylmalate = (2S)-2-isopropylmalate</text>
        <dbReference type="Rhea" id="RHEA:32287"/>
        <dbReference type="ChEBI" id="CHEBI:1178"/>
        <dbReference type="ChEBI" id="CHEBI:35121"/>
        <dbReference type="EC" id="4.2.1.33"/>
    </reaction>
</comment>
<comment type="pathway">
    <text>Amino-acid biosynthesis; L-leucine biosynthesis; L-leucine from 3-methyl-2-oxobutanoate: step 2/4.</text>
</comment>
<comment type="subunit">
    <text evidence="1">Heterodimer of LeuC and LeuD.</text>
</comment>
<comment type="similarity">
    <text evidence="3">Belongs to the LeuD family. LeuD type 1 subfamily.</text>
</comment>
<accession>P9WK95</accession>
<accession>L0TE54</accession>
<accession>O53236</accession>
<accession>P65277</accession>
<feature type="chain" id="PRO_0000141840" description="3-isopropylmalate dehydratase small subunit">
    <location>
        <begin position="1"/>
        <end position="198"/>
    </location>
</feature>
<feature type="cross-link" description="Isoglutamyl lysine isopeptide (Lys-Gln) (interchain with Q-Cter in protein Pup)" evidence="2">
    <location>
        <position position="154"/>
    </location>
</feature>
<feature type="strand" evidence="5">
    <location>
        <begin position="5"/>
        <end position="14"/>
    </location>
</feature>
<feature type="helix" evidence="5">
    <location>
        <begin position="21"/>
        <end position="24"/>
    </location>
</feature>
<feature type="helix" evidence="5">
    <location>
        <begin position="27"/>
        <end position="29"/>
    </location>
</feature>
<feature type="helix" evidence="5">
    <location>
        <begin position="39"/>
        <end position="41"/>
    </location>
</feature>
<feature type="turn" evidence="5">
    <location>
        <begin position="42"/>
        <end position="45"/>
    </location>
</feature>
<feature type="helix" evidence="5">
    <location>
        <begin position="46"/>
        <end position="48"/>
    </location>
</feature>
<feature type="helix" evidence="5">
    <location>
        <begin position="53"/>
        <end position="55"/>
    </location>
</feature>
<feature type="helix" evidence="5">
    <location>
        <begin position="59"/>
        <end position="61"/>
    </location>
</feature>
<feature type="strand" evidence="5">
    <location>
        <begin position="64"/>
        <end position="67"/>
    </location>
</feature>
<feature type="strand" evidence="5">
    <location>
        <begin position="69"/>
        <end position="71"/>
    </location>
</feature>
<feature type="strand" evidence="4">
    <location>
        <begin position="73"/>
        <end position="75"/>
    </location>
</feature>
<feature type="helix" evidence="5">
    <location>
        <begin position="78"/>
        <end position="87"/>
    </location>
</feature>
<feature type="strand" evidence="5">
    <location>
        <begin position="91"/>
        <end position="97"/>
    </location>
</feature>
<feature type="helix" evidence="5">
    <location>
        <begin position="99"/>
        <end position="107"/>
    </location>
</feature>
<feature type="strand" evidence="5">
    <location>
        <begin position="111"/>
        <end position="114"/>
    </location>
</feature>
<feature type="helix" evidence="5">
    <location>
        <begin position="117"/>
        <end position="129"/>
    </location>
</feature>
<feature type="strand" evidence="5">
    <location>
        <begin position="134"/>
        <end position="138"/>
    </location>
</feature>
<feature type="turn" evidence="5">
    <location>
        <begin position="139"/>
        <end position="142"/>
    </location>
</feature>
<feature type="strand" evidence="5">
    <location>
        <begin position="143"/>
        <end position="146"/>
    </location>
</feature>
<feature type="strand" evidence="5">
    <location>
        <begin position="149"/>
        <end position="152"/>
    </location>
</feature>
<feature type="helix" evidence="5">
    <location>
        <begin position="157"/>
        <end position="165"/>
    </location>
</feature>
<sequence>MEAFHTHSGIGVPLRRSNVDTDQIIPAVFLKRVTRTGFEDGLFAGWRSDPAFVLNLSPFDRGSVLVAGPDFGTGSSREHAVWALMDYGFRVVISSRFGDIFRGNAGKAGLLAAEVAQDDVELLWKLIEQSPGLEITANLQDRIITAATVVLPFKIDDHSAWRLLEGLDDIALTLRKLDEIEAFEGACAYWKPRTLPAP</sequence>
<protein>
    <recommendedName>
        <fullName>3-isopropylmalate dehydratase small subunit</fullName>
        <ecNumber>4.2.1.33</ecNumber>
    </recommendedName>
    <alternativeName>
        <fullName>Alpha-IPM isomerase</fullName>
        <shortName>IPMI</shortName>
    </alternativeName>
    <alternativeName>
        <fullName>Isopropylmalate isomerase</fullName>
    </alternativeName>
</protein>
<dbReference type="EC" id="4.2.1.33"/>
<dbReference type="EMBL" id="AL123456">
    <property type="protein sequence ID" value="CCP45792.1"/>
    <property type="molecule type" value="Genomic_DNA"/>
</dbReference>
<dbReference type="PIR" id="F70853">
    <property type="entry name" value="F70853"/>
</dbReference>
<dbReference type="RefSeq" id="NP_217503.1">
    <property type="nucleotide sequence ID" value="NC_000962.3"/>
</dbReference>
<dbReference type="RefSeq" id="WP_003415110.1">
    <property type="nucleotide sequence ID" value="NZ_NVQJ01000041.1"/>
</dbReference>
<dbReference type="PDB" id="3H5E">
    <property type="method" value="X-ray"/>
    <property type="resolution" value="2.00 A"/>
    <property type="chains" value="A/B=2-156"/>
</dbReference>
<dbReference type="PDB" id="3H5H">
    <property type="method" value="X-ray"/>
    <property type="resolution" value="2.50 A"/>
    <property type="chains" value="A/B=2-186"/>
</dbReference>
<dbReference type="PDB" id="3H5J">
    <property type="method" value="X-ray"/>
    <property type="resolution" value="1.20 A"/>
    <property type="chains" value="A/B=2-168"/>
</dbReference>
<dbReference type="PDBsum" id="3H5E"/>
<dbReference type="PDBsum" id="3H5H"/>
<dbReference type="PDBsum" id="3H5J"/>
<dbReference type="SMR" id="P9WK95"/>
<dbReference type="FunCoup" id="P9WK95">
    <property type="interactions" value="143"/>
</dbReference>
<dbReference type="STRING" id="83332.Rv2987c"/>
<dbReference type="PaxDb" id="83332-Rv2987c"/>
<dbReference type="DNASU" id="888225"/>
<dbReference type="GeneID" id="45426976"/>
<dbReference type="GeneID" id="888225"/>
<dbReference type="KEGG" id="mtu:Rv2987c"/>
<dbReference type="KEGG" id="mtv:RVBD_2987c"/>
<dbReference type="TubercuList" id="Rv2987c"/>
<dbReference type="eggNOG" id="COG0066">
    <property type="taxonomic scope" value="Bacteria"/>
</dbReference>
<dbReference type="InParanoid" id="P9WK95"/>
<dbReference type="OrthoDB" id="9777465at2"/>
<dbReference type="PhylomeDB" id="P9WK95"/>
<dbReference type="BRENDA" id="4.2.1.33">
    <property type="organism ID" value="3445"/>
</dbReference>
<dbReference type="UniPathway" id="UPA00048">
    <property type="reaction ID" value="UER00071"/>
</dbReference>
<dbReference type="EvolutionaryTrace" id="P9WK95"/>
<dbReference type="Proteomes" id="UP000001584">
    <property type="component" value="Chromosome"/>
</dbReference>
<dbReference type="GO" id="GO:0009316">
    <property type="term" value="C:3-isopropylmalate dehydratase complex"/>
    <property type="evidence" value="ECO:0007669"/>
    <property type="project" value="InterPro"/>
</dbReference>
<dbReference type="GO" id="GO:0005886">
    <property type="term" value="C:plasma membrane"/>
    <property type="evidence" value="ECO:0007005"/>
    <property type="project" value="MTBBASE"/>
</dbReference>
<dbReference type="GO" id="GO:0003861">
    <property type="term" value="F:3-isopropylmalate dehydratase activity"/>
    <property type="evidence" value="ECO:0007669"/>
    <property type="project" value="UniProtKB-UniRule"/>
</dbReference>
<dbReference type="GO" id="GO:0009098">
    <property type="term" value="P:L-leucine biosynthetic process"/>
    <property type="evidence" value="ECO:0000315"/>
    <property type="project" value="MTBBASE"/>
</dbReference>
<dbReference type="CDD" id="cd01577">
    <property type="entry name" value="IPMI_Swivel"/>
    <property type="match status" value="1"/>
</dbReference>
<dbReference type="FunFam" id="3.20.19.10:FF:000003">
    <property type="entry name" value="3-isopropylmalate dehydratase small subunit"/>
    <property type="match status" value="1"/>
</dbReference>
<dbReference type="Gene3D" id="3.20.19.10">
    <property type="entry name" value="Aconitase, domain 4"/>
    <property type="match status" value="1"/>
</dbReference>
<dbReference type="HAMAP" id="MF_01031">
    <property type="entry name" value="LeuD_type1"/>
    <property type="match status" value="1"/>
</dbReference>
<dbReference type="InterPro" id="IPR004431">
    <property type="entry name" value="3-IsopropMal_deHydase_ssu"/>
</dbReference>
<dbReference type="InterPro" id="IPR015928">
    <property type="entry name" value="Aconitase/3IPM_dehydase_swvl"/>
</dbReference>
<dbReference type="InterPro" id="IPR000573">
    <property type="entry name" value="AconitaseA/IPMdHydase_ssu_swvl"/>
</dbReference>
<dbReference type="InterPro" id="IPR033940">
    <property type="entry name" value="IPMI_Swivel"/>
</dbReference>
<dbReference type="InterPro" id="IPR050075">
    <property type="entry name" value="LeuD"/>
</dbReference>
<dbReference type="NCBIfam" id="TIGR00171">
    <property type="entry name" value="leuD"/>
    <property type="match status" value="1"/>
</dbReference>
<dbReference type="NCBIfam" id="NF002458">
    <property type="entry name" value="PRK01641.1"/>
    <property type="match status" value="1"/>
</dbReference>
<dbReference type="PANTHER" id="PTHR43345:SF5">
    <property type="entry name" value="3-ISOPROPYLMALATE DEHYDRATASE SMALL SUBUNIT"/>
    <property type="match status" value="1"/>
</dbReference>
<dbReference type="PANTHER" id="PTHR43345">
    <property type="entry name" value="3-ISOPROPYLMALATE DEHYDRATASE SMALL SUBUNIT 2-RELATED-RELATED"/>
    <property type="match status" value="1"/>
</dbReference>
<dbReference type="Pfam" id="PF00694">
    <property type="entry name" value="Aconitase_C"/>
    <property type="match status" value="1"/>
</dbReference>
<dbReference type="SUPFAM" id="SSF52016">
    <property type="entry name" value="LeuD/IlvD-like"/>
    <property type="match status" value="1"/>
</dbReference>
<name>LEUD_MYCTU</name>
<reference key="1">
    <citation type="journal article" date="1998" name="Nature">
        <title>Deciphering the biology of Mycobacterium tuberculosis from the complete genome sequence.</title>
        <authorList>
            <person name="Cole S.T."/>
            <person name="Brosch R."/>
            <person name="Parkhill J."/>
            <person name="Garnier T."/>
            <person name="Churcher C.M."/>
            <person name="Harris D.E."/>
            <person name="Gordon S.V."/>
            <person name="Eiglmeier K."/>
            <person name="Gas S."/>
            <person name="Barry C.E. III"/>
            <person name="Tekaia F."/>
            <person name="Badcock K."/>
            <person name="Basham D."/>
            <person name="Brown D."/>
            <person name="Chillingworth T."/>
            <person name="Connor R."/>
            <person name="Davies R.M."/>
            <person name="Devlin K."/>
            <person name="Feltwell T."/>
            <person name="Gentles S."/>
            <person name="Hamlin N."/>
            <person name="Holroyd S."/>
            <person name="Hornsby T."/>
            <person name="Jagels K."/>
            <person name="Krogh A."/>
            <person name="McLean J."/>
            <person name="Moule S."/>
            <person name="Murphy L.D."/>
            <person name="Oliver S."/>
            <person name="Osborne J."/>
            <person name="Quail M.A."/>
            <person name="Rajandream M.A."/>
            <person name="Rogers J."/>
            <person name="Rutter S."/>
            <person name="Seeger K."/>
            <person name="Skelton S."/>
            <person name="Squares S."/>
            <person name="Squares R."/>
            <person name="Sulston J.E."/>
            <person name="Taylor K."/>
            <person name="Whitehead S."/>
            <person name="Barrell B.G."/>
        </authorList>
    </citation>
    <scope>NUCLEOTIDE SEQUENCE [LARGE SCALE GENOMIC DNA]</scope>
    <source>
        <strain>ATCC 25618 / H37Rv</strain>
    </source>
</reference>
<reference key="2">
    <citation type="journal article" date="2010" name="PLoS ONE">
        <title>Prokaryotic ubiquitin-like protein (Pup) proteome of Mycobacterium tuberculosis.</title>
        <authorList>
            <person name="Festa R.A."/>
            <person name="McAllister F."/>
            <person name="Pearce M.J."/>
            <person name="Mintseris J."/>
            <person name="Burns K.E."/>
            <person name="Gygi S.P."/>
            <person name="Darwin K.H."/>
        </authorList>
    </citation>
    <scope>PUPYLATION AT LYS-154</scope>
    <scope>IDENTIFICATION BY MASS SPECTROMETRY</scope>
    <source>
        <strain>ATCC 25618 / H37Rv</strain>
    </source>
</reference>
<reference key="3">
    <citation type="journal article" date="2011" name="Mol. Cell. Proteomics">
        <title>Proteogenomic analysis of Mycobacterium tuberculosis by high resolution mass spectrometry.</title>
        <authorList>
            <person name="Kelkar D.S."/>
            <person name="Kumar D."/>
            <person name="Kumar P."/>
            <person name="Balakrishnan L."/>
            <person name="Muthusamy B."/>
            <person name="Yadav A.K."/>
            <person name="Shrivastava P."/>
            <person name="Marimuthu A."/>
            <person name="Anand S."/>
            <person name="Sundaram H."/>
            <person name="Kingsbury R."/>
            <person name="Harsha H.C."/>
            <person name="Nair B."/>
            <person name="Prasad T.S."/>
            <person name="Chauhan D.S."/>
            <person name="Katoch K."/>
            <person name="Katoch V.M."/>
            <person name="Kumar P."/>
            <person name="Chaerkady R."/>
            <person name="Ramachandran S."/>
            <person name="Dash D."/>
            <person name="Pandey A."/>
        </authorList>
    </citation>
    <scope>IDENTIFICATION BY MASS SPECTROMETRY [LARGE SCALE ANALYSIS]</scope>
    <source>
        <strain>ATCC 25618 / H37Rv</strain>
    </source>
</reference>